<dbReference type="EMBL" id="CP002433">
    <property type="protein sequence ID" value="ADU69849.1"/>
    <property type="molecule type" value="Genomic_DNA"/>
</dbReference>
<dbReference type="RefSeq" id="WP_013509704.1">
    <property type="nucleotide sequence ID" value="NC_014837.1"/>
</dbReference>
<dbReference type="SMR" id="E6WEY6"/>
<dbReference type="STRING" id="592316.Pat9b_2549"/>
<dbReference type="KEGG" id="pao:Pat9b_2549"/>
<dbReference type="eggNOG" id="COG3449">
    <property type="taxonomic scope" value="Bacteria"/>
</dbReference>
<dbReference type="HOGENOM" id="CLU_113664_3_2_6"/>
<dbReference type="OrthoDB" id="282744at2"/>
<dbReference type="Proteomes" id="UP000001624">
    <property type="component" value="Chromosome"/>
</dbReference>
<dbReference type="GO" id="GO:0005737">
    <property type="term" value="C:cytoplasm"/>
    <property type="evidence" value="ECO:0007669"/>
    <property type="project" value="UniProtKB-SubCell"/>
</dbReference>
<dbReference type="GO" id="GO:0008657">
    <property type="term" value="F:DNA topoisomerase type II (double strand cut, ATP-hydrolyzing) inhibitor activity"/>
    <property type="evidence" value="ECO:0007669"/>
    <property type="project" value="UniProtKB-UniRule"/>
</dbReference>
<dbReference type="Gene3D" id="3.20.80.10">
    <property type="entry name" value="Regulatory factor, effector binding domain"/>
    <property type="match status" value="1"/>
</dbReference>
<dbReference type="HAMAP" id="MF_01896">
    <property type="entry name" value="DNA_gyrase_inhibitor"/>
    <property type="match status" value="1"/>
</dbReference>
<dbReference type="InterPro" id="IPR010499">
    <property type="entry name" value="AraC_E-bd"/>
</dbReference>
<dbReference type="InterPro" id="IPR050908">
    <property type="entry name" value="DNA_gyrase_inhibitor"/>
</dbReference>
<dbReference type="InterPro" id="IPR024911">
    <property type="entry name" value="DNA_gyrase_inhibitor_GyrI"/>
</dbReference>
<dbReference type="InterPro" id="IPR029442">
    <property type="entry name" value="GyrI-like"/>
</dbReference>
<dbReference type="InterPro" id="IPR011256">
    <property type="entry name" value="Reg_factor_effector_dom_sf"/>
</dbReference>
<dbReference type="PANTHER" id="PTHR40055:SF2">
    <property type="entry name" value="DNA GYRASE INHIBITOR"/>
    <property type="match status" value="1"/>
</dbReference>
<dbReference type="PANTHER" id="PTHR40055">
    <property type="entry name" value="TRANSCRIPTIONAL REGULATOR YGIV-RELATED"/>
    <property type="match status" value="1"/>
</dbReference>
<dbReference type="Pfam" id="PF06445">
    <property type="entry name" value="GyrI-like"/>
    <property type="match status" value="1"/>
</dbReference>
<dbReference type="SMART" id="SM00871">
    <property type="entry name" value="AraC_E_bind"/>
    <property type="match status" value="1"/>
</dbReference>
<dbReference type="SUPFAM" id="SSF55136">
    <property type="entry name" value="Probable bacterial effector-binding domain"/>
    <property type="match status" value="1"/>
</dbReference>
<gene>
    <name evidence="1" type="primary">sbmC</name>
    <name type="ordered locus">Pat9b_2549</name>
</gene>
<sequence>MKTSIVERPAQHWVGYRLQGPWQETVPQGFAQLKDWVARHALQGEWMAIYYGNPQVVPPQELSVETVLTVPADFALAVGEGIQHGTLAGGHYFHTCTEVQNNDFFSAWNAFFAQLQQRSDWQVDDRPCYEHYLSDGSQSGNWLLNMYIPVRPV</sequence>
<protein>
    <recommendedName>
        <fullName evidence="1">DNA gyrase inhibitor</fullName>
    </recommendedName>
</protein>
<name>SBMC_PANSA</name>
<proteinExistence type="inferred from homology"/>
<reference key="1">
    <citation type="submission" date="2010-12" db="EMBL/GenBank/DDBJ databases">
        <title>Complete sequence chromosome of Pantoea sp. At-9b.</title>
        <authorList>
            <consortium name="US DOE Joint Genome Institute"/>
            <person name="Lucas S."/>
            <person name="Copeland A."/>
            <person name="Lapidus A."/>
            <person name="Cheng J.-F."/>
            <person name="Goodwin L."/>
            <person name="Pitluck S."/>
            <person name="Davenport K."/>
            <person name="Detter J.C."/>
            <person name="Han C."/>
            <person name="Tapia R."/>
            <person name="Land M."/>
            <person name="Hauser L."/>
            <person name="Kyrpides N."/>
            <person name="Ivanova N."/>
            <person name="Ovchinnikova G."/>
            <person name="Pinto A."/>
            <person name="Currie C."/>
            <person name="Woyke T."/>
        </authorList>
    </citation>
    <scope>NUCLEOTIDE SEQUENCE [LARGE SCALE GENOMIC DNA]</scope>
    <source>
        <strain>At-9b</strain>
    </source>
</reference>
<keyword id="KW-0963">Cytoplasm</keyword>
<keyword id="KW-0346">Stress response</keyword>
<organism>
    <name type="scientific">Pantoea sp. (strain At-9b)</name>
    <dbReference type="NCBI Taxonomy" id="592316"/>
    <lineage>
        <taxon>Bacteria</taxon>
        <taxon>Pseudomonadati</taxon>
        <taxon>Pseudomonadota</taxon>
        <taxon>Gammaproteobacteria</taxon>
        <taxon>Enterobacterales</taxon>
        <taxon>Erwiniaceae</taxon>
        <taxon>Pantoea</taxon>
    </lineage>
</organism>
<comment type="function">
    <text evidence="1">Inhibits the supercoiling activity of DNA gyrase. Acts by inhibiting DNA gyrase at an early step, prior to (or at the step of) binding of DNA by the gyrase. It protects cells against toxins that target DNA gyrase, by inhibiting activity of these toxins and reducing the formation of lethal double-strand breaks in the cell.</text>
</comment>
<comment type="subunit">
    <text evidence="1">Interacts with DNA gyrase.</text>
</comment>
<comment type="subcellular location">
    <subcellularLocation>
        <location evidence="1">Cytoplasm</location>
    </subcellularLocation>
</comment>
<comment type="similarity">
    <text evidence="1">Belongs to the DNA gyrase inhibitor family.</text>
</comment>
<evidence type="ECO:0000255" key="1">
    <source>
        <dbReference type="HAMAP-Rule" id="MF_01896"/>
    </source>
</evidence>
<feature type="chain" id="PRO_0000409703" description="DNA gyrase inhibitor">
    <location>
        <begin position="1"/>
        <end position="153"/>
    </location>
</feature>
<accession>E6WEY6</accession>